<feature type="initiator methionine" description="Removed" evidence="2">
    <location>
        <position position="1"/>
    </location>
</feature>
<feature type="chain" id="PRO_0000236235" description="Serine incorporator 1">
    <location>
        <begin position="2"/>
        <end position="453"/>
    </location>
</feature>
<feature type="topological domain" description="Cytoplasmic" evidence="3">
    <location>
        <begin position="2"/>
        <end position="39"/>
    </location>
</feature>
<feature type="transmembrane region" description="Helical" evidence="3">
    <location>
        <begin position="40"/>
        <end position="60"/>
    </location>
</feature>
<feature type="topological domain" description="Lumenal" evidence="3">
    <location>
        <begin position="61"/>
        <end position="88"/>
    </location>
</feature>
<feature type="transmembrane region" description="Helical" evidence="3">
    <location>
        <begin position="89"/>
        <end position="109"/>
    </location>
</feature>
<feature type="topological domain" description="Cytoplasmic" evidence="3">
    <location>
        <begin position="110"/>
        <end position="123"/>
    </location>
</feature>
<feature type="transmembrane region" description="Helical" evidence="3">
    <location>
        <begin position="124"/>
        <end position="144"/>
    </location>
</feature>
<feature type="topological domain" description="Lumenal" evidence="3">
    <location>
        <begin position="145"/>
        <end position="151"/>
    </location>
</feature>
<feature type="transmembrane region" description="Helical" evidence="3">
    <location>
        <begin position="152"/>
        <end position="172"/>
    </location>
</feature>
<feature type="topological domain" description="Cytoplasmic" evidence="3">
    <location>
        <begin position="173"/>
        <end position="197"/>
    </location>
</feature>
<feature type="transmembrane region" description="Helical" evidence="3">
    <location>
        <begin position="198"/>
        <end position="218"/>
    </location>
</feature>
<feature type="topological domain" description="Lumenal" evidence="3">
    <location>
        <begin position="219"/>
        <end position="231"/>
    </location>
</feature>
<feature type="transmembrane region" description="Helical" evidence="3">
    <location>
        <begin position="232"/>
        <end position="252"/>
    </location>
</feature>
<feature type="topological domain" description="Cytoplasmic" evidence="3">
    <location>
        <begin position="253"/>
        <end position="259"/>
    </location>
</feature>
<feature type="transmembrane region" description="Helical" evidence="3">
    <location>
        <begin position="260"/>
        <end position="280"/>
    </location>
</feature>
<feature type="topological domain" description="Lumenal" evidence="3">
    <location>
        <begin position="281"/>
        <end position="309"/>
    </location>
</feature>
<feature type="transmembrane region" description="Helical" evidence="3">
    <location>
        <begin position="310"/>
        <end position="330"/>
    </location>
</feature>
<feature type="topological domain" description="Cytoplasmic" evidence="3">
    <location>
        <begin position="331"/>
        <end position="387"/>
    </location>
</feature>
<feature type="transmembrane region" description="Helical" evidence="3">
    <location>
        <begin position="388"/>
        <end position="408"/>
    </location>
</feature>
<feature type="topological domain" description="Lumenal" evidence="3">
    <location>
        <begin position="409"/>
        <end position="426"/>
    </location>
</feature>
<feature type="transmembrane region" description="Helical" evidence="3">
    <location>
        <begin position="427"/>
        <end position="447"/>
    </location>
</feature>
<feature type="topological domain" description="Cytoplasmic" evidence="3">
    <location>
        <begin position="448"/>
        <end position="453"/>
    </location>
</feature>
<feature type="modified residue" description="Phosphoserine" evidence="2">
    <location>
        <position position="351"/>
    </location>
</feature>
<feature type="modified residue" description="Phosphothreonine" evidence="2">
    <location>
        <position position="352"/>
    </location>
</feature>
<feature type="modified residue" description="Phosphoserine" evidence="2">
    <location>
        <position position="364"/>
    </location>
</feature>
<feature type="lipid moiety-binding region" description="N-myristoyl glycine" evidence="2">
    <location>
        <position position="2"/>
    </location>
</feature>
<protein>
    <recommendedName>
        <fullName>Serine incorporator 1</fullName>
    </recommendedName>
    <alternativeName>
        <fullName>Tumor differentially expressed protein 2</fullName>
    </alternativeName>
</protein>
<sequence length="453" mass="50628">MGSVLGLCSMASWIPCLCGSAPCLLCRCCPSGNNSTVTRLIYALFLLVGVCVACVMLIPGMEEQLNKIPGFCENEKGMVPCNILVGYKAVYRLCFGLAMFYLLLSLLMIKVKSSSDPRAAIHNGFWFFKFAAAIAIIIGAFFIPEGTFTTVWFYVGMAGAFCFILIQLVLLIDFAHSWNESWVEKMEEGNSRCWYAALLSATALNYLLSLVAVVLFFVYYTHPASCAENKAFISVNMLLCLGASIMSILPKIQESQPRSGLLQSSVITVYTMYLTWSAMTNEPETECNPSLLNIIGYNTTSTVSKEGQSVQWWHTQGIIGLILFLLCVFYSSIRTSNNSQVNKLTLTSDESTLIEDGGARNDGSLEDGDDVHRAVDNERDGVTYSYSFFHFMLFLASLYIMMTLTNWYRYEPSREMKSQWTAVWVKISSSWIGIVLYVWTLVAPLVLTNRDFD</sequence>
<proteinExistence type="evidence at transcript level"/>
<comment type="function">
    <text evidence="1">Enhances the incorporation of serine into phosphatidylserine and sphingolipids.</text>
</comment>
<comment type="subunit">
    <text evidence="1">Interacts with SPTLC1.</text>
</comment>
<comment type="subcellular location">
    <subcellularLocation>
        <location evidence="1">Endoplasmic reticulum membrane</location>
        <topology evidence="1">Multi-pass membrane protein</topology>
    </subcellularLocation>
</comment>
<comment type="similarity">
    <text evidence="4">Belongs to the TDE1 family.</text>
</comment>
<gene>
    <name type="primary">SERINC1</name>
    <name type="synonym">TDE2</name>
</gene>
<accession>Q3MHV9</accession>
<reference key="1">
    <citation type="submission" date="2005-09" db="EMBL/GenBank/DDBJ databases">
        <authorList>
            <consortium name="NIH - Mammalian Gene Collection (MGC) project"/>
        </authorList>
    </citation>
    <scope>NUCLEOTIDE SEQUENCE [LARGE SCALE MRNA]</scope>
    <source>
        <strain>Hereford</strain>
        <tissue>Uterus</tissue>
    </source>
</reference>
<organism>
    <name type="scientific">Bos taurus</name>
    <name type="common">Bovine</name>
    <dbReference type="NCBI Taxonomy" id="9913"/>
    <lineage>
        <taxon>Eukaryota</taxon>
        <taxon>Metazoa</taxon>
        <taxon>Chordata</taxon>
        <taxon>Craniata</taxon>
        <taxon>Vertebrata</taxon>
        <taxon>Euteleostomi</taxon>
        <taxon>Mammalia</taxon>
        <taxon>Eutheria</taxon>
        <taxon>Laurasiatheria</taxon>
        <taxon>Artiodactyla</taxon>
        <taxon>Ruminantia</taxon>
        <taxon>Pecora</taxon>
        <taxon>Bovidae</taxon>
        <taxon>Bovinae</taxon>
        <taxon>Bos</taxon>
    </lineage>
</organism>
<keyword id="KW-0256">Endoplasmic reticulum</keyword>
<keyword id="KW-0444">Lipid biosynthesis</keyword>
<keyword id="KW-0443">Lipid metabolism</keyword>
<keyword id="KW-0449">Lipoprotein</keyword>
<keyword id="KW-0472">Membrane</keyword>
<keyword id="KW-0519">Myristate</keyword>
<keyword id="KW-0594">Phospholipid biosynthesis</keyword>
<keyword id="KW-1208">Phospholipid metabolism</keyword>
<keyword id="KW-0597">Phosphoprotein</keyword>
<keyword id="KW-1185">Reference proteome</keyword>
<keyword id="KW-0812">Transmembrane</keyword>
<keyword id="KW-1133">Transmembrane helix</keyword>
<evidence type="ECO:0000250" key="1">
    <source>
        <dbReference type="UniProtKB" id="Q7TNK0"/>
    </source>
</evidence>
<evidence type="ECO:0000250" key="2">
    <source>
        <dbReference type="UniProtKB" id="Q9NRX5"/>
    </source>
</evidence>
<evidence type="ECO:0000255" key="3"/>
<evidence type="ECO:0000305" key="4"/>
<name>SERC1_BOVIN</name>
<dbReference type="EMBL" id="BC104617">
    <property type="protein sequence ID" value="AAI04618.1"/>
    <property type="molecule type" value="mRNA"/>
</dbReference>
<dbReference type="RefSeq" id="NP_001030504.1">
    <property type="nucleotide sequence ID" value="NM_001035427.1"/>
</dbReference>
<dbReference type="SMR" id="Q3MHV9"/>
<dbReference type="FunCoup" id="Q3MHV9">
    <property type="interactions" value="4187"/>
</dbReference>
<dbReference type="STRING" id="9913.ENSBTAP00000000021"/>
<dbReference type="PaxDb" id="9913-ENSBTAP00000000021"/>
<dbReference type="Ensembl" id="ENSBTAT00000087235.1">
    <property type="protein sequence ID" value="ENSBTAP00000065597.1"/>
    <property type="gene ID" value="ENSBTAG00000000019.7"/>
</dbReference>
<dbReference type="GeneID" id="539993"/>
<dbReference type="KEGG" id="bta:539993"/>
<dbReference type="CTD" id="57515"/>
<dbReference type="VEuPathDB" id="HostDB:ENSBTAG00000000019"/>
<dbReference type="eggNOG" id="KOG2592">
    <property type="taxonomic scope" value="Eukaryota"/>
</dbReference>
<dbReference type="GeneTree" id="ENSGT01030000234623"/>
<dbReference type="InParanoid" id="Q3MHV9"/>
<dbReference type="OrthoDB" id="5963193at2759"/>
<dbReference type="Reactome" id="R-BTA-977347">
    <property type="pathway name" value="Serine biosynthesis"/>
</dbReference>
<dbReference type="Proteomes" id="UP000009136">
    <property type="component" value="Chromosome 9"/>
</dbReference>
<dbReference type="Bgee" id="ENSBTAG00000000019">
    <property type="expression patterns" value="Expressed in occipital lobe and 104 other cell types or tissues"/>
</dbReference>
<dbReference type="GO" id="GO:0005789">
    <property type="term" value="C:endoplasmic reticulum membrane"/>
    <property type="evidence" value="ECO:0007669"/>
    <property type="project" value="UniProtKB-SubCell"/>
</dbReference>
<dbReference type="GO" id="GO:0016020">
    <property type="term" value="C:membrane"/>
    <property type="evidence" value="ECO:0000318"/>
    <property type="project" value="GO_Central"/>
</dbReference>
<dbReference type="GO" id="GO:0008654">
    <property type="term" value="P:phospholipid biosynthetic process"/>
    <property type="evidence" value="ECO:0007669"/>
    <property type="project" value="UniProtKB-KW"/>
</dbReference>
<dbReference type="InterPro" id="IPR005016">
    <property type="entry name" value="TDE1/TMS"/>
</dbReference>
<dbReference type="PANTHER" id="PTHR10383">
    <property type="entry name" value="SERINE INCORPORATOR"/>
    <property type="match status" value="1"/>
</dbReference>
<dbReference type="PANTHER" id="PTHR10383:SF15">
    <property type="entry name" value="SERINE INCORPORATOR 1"/>
    <property type="match status" value="1"/>
</dbReference>
<dbReference type="Pfam" id="PF03348">
    <property type="entry name" value="Serinc"/>
    <property type="match status" value="1"/>
</dbReference>